<sequence length="776" mass="89154">MQRPPPEDFSLKETKPHLGGGKVTGDKLTTTYDLVEQMQYLYVRVVKAKELPGKDLTGSCDPYVEVKLGNYRGTTRHFEKKSNPEWNQVFAFSKDRVQASYLEATVKDKDLVKDDLIGRVVFDLNEIPKRVPPDSPLAPQWYRLEDGKGQKVKGELMLAVWFGTQADEAFPEAWHSDAATVSGTDALANIRSKVYLSPKLWYLRVNVIEAQDLIPSDKGRYPEVFVKVIMGNQALRTRVSQSRSINPMWNEDLMFVVAEPFEEPLILSVEDRVAPNKDEVLGRCAVPLQYLDKRFDYRPVNSRWFNLEKHVIMEGGEKKEIKFASKIHMRICLEGGYHVLDESTHYSSDLRPTAKQLWKPNIGVLELGVLNATGLMPMKAKEGGRGTTDAYCVAKYGQKWIRTRTIIDSFTPRWNEQYTWEVFDPCTVVTVGVFDNCHLHGGDKNNGGGKDSRIGKVRIRLSTLEADRVYTHSYPLLVLHPSGVKKMGEIHLAVRFTCSSLLNMMYMYSMPLLPKMHYLHPLTVSQLDNLRHQATQIVSTRLTRAEPPLRKEVVEYMLDVGSHMWSMRRSKANFFRIMGVLSGIIAVGKWFEQICVWKNPITTVLIHILFIILVIYPELILPTIFLYLFLIGVWYYRWRPRHPPHMDTRLSHADSAHPDELDEEFDTFPTSRPSDIVRMRYDRLRSIAGRIQTVVGDLATQGERFQSLLSWRDPRATALFVLFCLIAAVILYITPFQVVAFAIGLYVLRHPRLRYKLPSVPLNFFRRLPARTDCML</sequence>
<evidence type="ECO:0000250" key="1">
    <source>
        <dbReference type="UniProtKB" id="Q9FL59"/>
    </source>
</evidence>
<evidence type="ECO:0000255" key="2"/>
<evidence type="ECO:0000255" key="3">
    <source>
        <dbReference type="PROSITE-ProRule" id="PRU00041"/>
    </source>
</evidence>
<evidence type="ECO:0000256" key="4">
    <source>
        <dbReference type="SAM" id="MobiDB-lite"/>
    </source>
</evidence>
<evidence type="ECO:0000269" key="5">
    <source>
    </source>
</evidence>
<evidence type="ECO:0000269" key="6">
    <source>
    </source>
</evidence>
<evidence type="ECO:0000303" key="7">
    <source>
    </source>
</evidence>
<evidence type="ECO:0000303" key="8">
    <source>
    </source>
</evidence>
<evidence type="ECO:0000305" key="9"/>
<evidence type="ECO:0000312" key="10">
    <source>
        <dbReference type="Araport" id="AT1G51570"/>
    </source>
</evidence>
<evidence type="ECO:0000312" key="11">
    <source>
        <dbReference type="EMBL" id="AAG50882.1"/>
    </source>
</evidence>
<proteinExistence type="evidence at protein level"/>
<reference key="1">
    <citation type="journal article" date="2000" name="Nature">
        <title>Sequence and analysis of chromosome 1 of the plant Arabidopsis thaliana.</title>
        <authorList>
            <person name="Theologis A."/>
            <person name="Ecker J.R."/>
            <person name="Palm C.J."/>
            <person name="Federspiel N.A."/>
            <person name="Kaul S."/>
            <person name="White O."/>
            <person name="Alonso J."/>
            <person name="Altafi H."/>
            <person name="Araujo R."/>
            <person name="Bowman C.L."/>
            <person name="Brooks S.Y."/>
            <person name="Buehler E."/>
            <person name="Chan A."/>
            <person name="Chao Q."/>
            <person name="Chen H."/>
            <person name="Cheuk R.F."/>
            <person name="Chin C.W."/>
            <person name="Chung M.K."/>
            <person name="Conn L."/>
            <person name="Conway A.B."/>
            <person name="Conway A.R."/>
            <person name="Creasy T.H."/>
            <person name="Dewar K."/>
            <person name="Dunn P."/>
            <person name="Etgu P."/>
            <person name="Feldblyum T.V."/>
            <person name="Feng J.-D."/>
            <person name="Fong B."/>
            <person name="Fujii C.Y."/>
            <person name="Gill J.E."/>
            <person name="Goldsmith A.D."/>
            <person name="Haas B."/>
            <person name="Hansen N.F."/>
            <person name="Hughes B."/>
            <person name="Huizar L."/>
            <person name="Hunter J.L."/>
            <person name="Jenkins J."/>
            <person name="Johnson-Hopson C."/>
            <person name="Khan S."/>
            <person name="Khaykin E."/>
            <person name="Kim C.J."/>
            <person name="Koo H.L."/>
            <person name="Kremenetskaia I."/>
            <person name="Kurtz D.B."/>
            <person name="Kwan A."/>
            <person name="Lam B."/>
            <person name="Langin-Hooper S."/>
            <person name="Lee A."/>
            <person name="Lee J.M."/>
            <person name="Lenz C.A."/>
            <person name="Li J.H."/>
            <person name="Li Y.-P."/>
            <person name="Lin X."/>
            <person name="Liu S.X."/>
            <person name="Liu Z.A."/>
            <person name="Luros J.S."/>
            <person name="Maiti R."/>
            <person name="Marziali A."/>
            <person name="Militscher J."/>
            <person name="Miranda M."/>
            <person name="Nguyen M."/>
            <person name="Nierman W.C."/>
            <person name="Osborne B.I."/>
            <person name="Pai G."/>
            <person name="Peterson J."/>
            <person name="Pham P.K."/>
            <person name="Rizzo M."/>
            <person name="Rooney T."/>
            <person name="Rowley D."/>
            <person name="Sakano H."/>
            <person name="Salzberg S.L."/>
            <person name="Schwartz J.R."/>
            <person name="Shinn P."/>
            <person name="Southwick A.M."/>
            <person name="Sun H."/>
            <person name="Tallon L.J."/>
            <person name="Tambunga G."/>
            <person name="Toriumi M.J."/>
            <person name="Town C.D."/>
            <person name="Utterback T."/>
            <person name="Van Aken S."/>
            <person name="Vaysberg M."/>
            <person name="Vysotskaia V.S."/>
            <person name="Walker M."/>
            <person name="Wu D."/>
            <person name="Yu G."/>
            <person name="Fraser C.M."/>
            <person name="Venter J.C."/>
            <person name="Davis R.W."/>
        </authorList>
    </citation>
    <scope>NUCLEOTIDE SEQUENCE [LARGE SCALE GENOMIC DNA]</scope>
    <source>
        <strain>cv. Columbia</strain>
    </source>
</reference>
<reference key="2">
    <citation type="journal article" date="2017" name="Plant J.">
        <title>Araport11: a complete reannotation of the Arabidopsis thaliana reference genome.</title>
        <authorList>
            <person name="Cheng C.Y."/>
            <person name="Krishnakumar V."/>
            <person name="Chan A.P."/>
            <person name="Thibaud-Nissen F."/>
            <person name="Schobel S."/>
            <person name="Town C.D."/>
        </authorList>
    </citation>
    <scope>GENOME REANNOTATION</scope>
    <source>
        <strain>cv. Columbia</strain>
    </source>
</reference>
<reference key="3">
    <citation type="journal article" date="2003" name="Science">
        <title>Empirical analysis of transcriptional activity in the Arabidopsis genome.</title>
        <authorList>
            <person name="Yamada K."/>
            <person name="Lim J."/>
            <person name="Dale J.M."/>
            <person name="Chen H."/>
            <person name="Shinn P."/>
            <person name="Palm C.J."/>
            <person name="Southwick A.M."/>
            <person name="Wu H.C."/>
            <person name="Kim C.J."/>
            <person name="Nguyen M."/>
            <person name="Pham P.K."/>
            <person name="Cheuk R.F."/>
            <person name="Karlin-Newmann G."/>
            <person name="Liu S.X."/>
            <person name="Lam B."/>
            <person name="Sakano H."/>
            <person name="Wu T."/>
            <person name="Yu G."/>
            <person name="Miranda M."/>
            <person name="Quach H.L."/>
            <person name="Tripp M."/>
            <person name="Chang C.H."/>
            <person name="Lee J.M."/>
            <person name="Toriumi M.J."/>
            <person name="Chan M.M."/>
            <person name="Tang C.C."/>
            <person name="Onodera C.S."/>
            <person name="Deng J.M."/>
            <person name="Akiyama K."/>
            <person name="Ansari Y."/>
            <person name="Arakawa T."/>
            <person name="Banh J."/>
            <person name="Banno F."/>
            <person name="Bowser L."/>
            <person name="Brooks S.Y."/>
            <person name="Carninci P."/>
            <person name="Chao Q."/>
            <person name="Choy N."/>
            <person name="Enju A."/>
            <person name="Goldsmith A.D."/>
            <person name="Gurjal M."/>
            <person name="Hansen N.F."/>
            <person name="Hayashizaki Y."/>
            <person name="Johnson-Hopson C."/>
            <person name="Hsuan V.W."/>
            <person name="Iida K."/>
            <person name="Karnes M."/>
            <person name="Khan S."/>
            <person name="Koesema E."/>
            <person name="Ishida J."/>
            <person name="Jiang P.X."/>
            <person name="Jones T."/>
            <person name="Kawai J."/>
            <person name="Kamiya A."/>
            <person name="Meyers C."/>
            <person name="Nakajima M."/>
            <person name="Narusaka M."/>
            <person name="Seki M."/>
            <person name="Sakurai T."/>
            <person name="Satou M."/>
            <person name="Tamse R."/>
            <person name="Vaysberg M."/>
            <person name="Wallender E.K."/>
            <person name="Wong C."/>
            <person name="Yamamura Y."/>
            <person name="Yuan S."/>
            <person name="Shinozaki K."/>
            <person name="Davis R.W."/>
            <person name="Theologis A."/>
            <person name="Ecker J.R."/>
        </authorList>
    </citation>
    <scope>NUCLEOTIDE SEQUENCE [LARGE SCALE MRNA] OF 466-776</scope>
    <source>
        <strain>cv. Columbia</strain>
    </source>
</reference>
<reference key="4">
    <citation type="journal article" date="2018" name="Cell Rep.">
        <title>FTIP-dependent STM trafficking regulates shoot meristem development in Arabidopsis.</title>
        <authorList>
            <person name="Liu L."/>
            <person name="Li C."/>
            <person name="Song S."/>
            <person name="Teo Z.W.N."/>
            <person name="Shen L."/>
            <person name="Wang Y."/>
            <person name="Jackson D."/>
            <person name="Yu H."/>
        </authorList>
    </citation>
    <scope>FUNCTION</scope>
    <scope>DISRUPTION PHENOTYPE</scope>
    <scope>TISSUE SPECIFICITY</scope>
    <scope>SUBCELLULAR LOCATION</scope>
    <scope>INTERACTION WITH STM</scope>
    <source>
        <strain>cv. Columbia</strain>
    </source>
</reference>
<reference key="5">
    <citation type="journal article" date="2018" name="Plant Physiol.">
        <title>Characterization of multiple C2 domain and transmembrane region proteins in Arabidopsis.</title>
        <authorList>
            <person name="Liu L."/>
            <person name="Li C."/>
            <person name="Liang Z."/>
            <person name="Yu H."/>
        </authorList>
    </citation>
    <scope>TISSUE SPECIFICITY</scope>
    <scope>DEVELOPMENTAL STAGE</scope>
    <scope>SUBCELLULAR LOCATION</scope>
    <scope>GENE FAMILY</scope>
    <scope>NOMENCLATURE</scope>
    <source>
        <strain>cv. Columbia</strain>
    </source>
</reference>
<keyword id="KW-0106">Calcium</keyword>
<keyword id="KW-1003">Cell membrane</keyword>
<keyword id="KW-0963">Cytoplasm</keyword>
<keyword id="KW-0256">Endoplasmic reticulum</keyword>
<keyword id="KW-0967">Endosome</keyword>
<keyword id="KW-0328">Glycosyltransferase</keyword>
<keyword id="KW-0333">Golgi apparatus</keyword>
<keyword id="KW-0472">Membrane</keyword>
<keyword id="KW-0479">Metal-binding</keyword>
<keyword id="KW-1185">Reference proteome</keyword>
<keyword id="KW-0677">Repeat</keyword>
<keyword id="KW-0808">Transferase</keyword>
<keyword id="KW-0812">Transmembrane</keyword>
<keyword id="KW-1133">Transmembrane helix</keyword>
<name>FTIP4_ARATH</name>
<comment type="function">
    <text evidence="6 7">Required for proliferation and differentiation of shoot stem cells in the shoot apical meristem (SAM), thus determining the appropriate balance between the maintenance of shoot stem cells and their differentiation into other aboveground plant parts via the control of subcellular localization and intercellular trafficking of STM in the shoot apex (PubMed:29742441). Prevents intracellular trafficking of STM to the plasma membrane in cells in the peripheral shoot meristem region thus facilitating STM recycling to the nucleus to maintain stem cells (PubMed:29742441). May function as a signaling molecule by regulating the trafficking of other regulators (PubMed:29259105).</text>
</comment>
<comment type="cofactor">
    <cofactor evidence="3">
        <name>Ca(2+)</name>
        <dbReference type="ChEBI" id="CHEBI:29108"/>
    </cofactor>
</comment>
<comment type="subunit">
    <text evidence="6">Interacts with and regulates subcellular localization and trafficking of STM.</text>
</comment>
<comment type="subcellular location">
    <subcellularLocation>
        <location evidence="1">Endoplasmic reticulum membrane</location>
        <topology evidence="2">Multi-pass membrane protein</topology>
    </subcellularLocation>
    <subcellularLocation>
        <location evidence="5 6">Cytoplasm</location>
    </subcellularLocation>
    <subcellularLocation>
        <location evidence="6">Vesicle</location>
    </subcellularLocation>
    <subcellularLocation>
        <location evidence="5 6">Cell membrane</location>
        <topology evidence="2">Multi-pass membrane protein</topology>
    </subcellularLocation>
    <subcellularLocation>
        <location evidence="5 6">Endosome membrane</location>
        <topology evidence="2">Multi-pass membrane protein</topology>
    </subcellularLocation>
    <subcellularLocation>
        <location evidence="6">Golgi apparatus membrane</location>
        <topology evidence="2">Multi-pass membrane protein</topology>
    </subcellularLocation>
</comment>
<comment type="tissue specificity">
    <text evidence="5 6">Highly expressed in both vegetative and inflorescence shoot apical meristems (SAMs) (PubMed:29259105, PubMed:29742441). Accumulates in root meristems (PubMed:29259105). Observed in flowers (PubMed:29259105).</text>
</comment>
<comment type="developmental stage">
    <text evidence="5">Present in developing flowers.</text>
</comment>
<comment type="disruption phenotype">
    <text evidence="6">No visible phenotypes. Plants lacking both FTIP3 and FTIP4 have a dwarf and bushy phenotype due to an accelerated stem cell differentiation causing early termination of shoot apices associated with an increased STM localization to the plasma membrane, but compromises nuclear localization.</text>
</comment>
<comment type="similarity">
    <text evidence="9">Belongs to the MCTP family.</text>
</comment>
<comment type="sequence caution" evidence="9">
    <conflict type="erroneous initiation">
        <sequence resource="EMBL-CDS" id="AAK74053"/>
    </conflict>
    <text>Truncated N-terminus.</text>
</comment>
<feature type="chain" id="PRO_0000445998" description="FT-interacting protein 4">
    <location>
        <begin position="1"/>
        <end position="776"/>
    </location>
</feature>
<feature type="transmembrane region" description="Helical" evidence="2">
    <location>
        <begin position="577"/>
        <end position="597"/>
    </location>
</feature>
<feature type="transmembrane region" description="Helical" evidence="2">
    <location>
        <begin position="608"/>
        <end position="628"/>
    </location>
</feature>
<feature type="transmembrane region" description="Helical" evidence="2">
    <location>
        <begin position="719"/>
        <end position="739"/>
    </location>
</feature>
<feature type="domain" description="C2 1" evidence="3">
    <location>
        <begin position="22"/>
        <end position="142"/>
    </location>
</feature>
<feature type="domain" description="C2 2" evidence="3">
    <location>
        <begin position="181"/>
        <end position="305"/>
    </location>
</feature>
<feature type="domain" description="C2 3" evidence="3">
    <location>
        <begin position="346"/>
        <end position="474"/>
    </location>
</feature>
<feature type="region of interest" description="Disordered" evidence="4">
    <location>
        <begin position="1"/>
        <end position="23"/>
    </location>
</feature>
<feature type="compositionally biased region" description="Basic and acidic residues" evidence="4">
    <location>
        <begin position="1"/>
        <end position="16"/>
    </location>
</feature>
<feature type="binding site" evidence="3">
    <location>
        <position position="55"/>
    </location>
    <ligand>
        <name>Ca(2+)</name>
        <dbReference type="ChEBI" id="CHEBI:29108"/>
        <label>1</label>
    </ligand>
</feature>
<feature type="binding site" evidence="3">
    <location>
        <position position="55"/>
    </location>
    <ligand>
        <name>Ca(2+)</name>
        <dbReference type="ChEBI" id="CHEBI:29108"/>
        <label>2</label>
    </ligand>
</feature>
<feature type="binding site" evidence="3">
    <location>
        <position position="61"/>
    </location>
    <ligand>
        <name>Ca(2+)</name>
        <dbReference type="ChEBI" id="CHEBI:29108"/>
        <label>1</label>
    </ligand>
</feature>
<feature type="binding site" evidence="3">
    <location>
        <position position="108"/>
    </location>
    <ligand>
        <name>Ca(2+)</name>
        <dbReference type="ChEBI" id="CHEBI:29108"/>
        <label>1</label>
    </ligand>
</feature>
<feature type="binding site" evidence="3">
    <location>
        <position position="108"/>
    </location>
    <ligand>
        <name>Ca(2+)</name>
        <dbReference type="ChEBI" id="CHEBI:29108"/>
        <label>2</label>
    </ligand>
</feature>
<feature type="binding site" evidence="3">
    <location>
        <position position="110"/>
    </location>
    <ligand>
        <name>Ca(2+)</name>
        <dbReference type="ChEBI" id="CHEBI:29108"/>
        <label>1</label>
    </ligand>
</feature>
<feature type="binding site" evidence="3">
    <location>
        <position position="110"/>
    </location>
    <ligand>
        <name>Ca(2+)</name>
        <dbReference type="ChEBI" id="CHEBI:29108"/>
        <label>2</label>
    </ligand>
</feature>
<feature type="binding site" evidence="3">
    <location>
        <position position="115"/>
    </location>
    <ligand>
        <name>Ca(2+)</name>
        <dbReference type="ChEBI" id="CHEBI:29108"/>
        <label>2</label>
    </ligand>
</feature>
<dbReference type="EMBL" id="AC025294">
    <property type="protein sequence ID" value="AAG50882.1"/>
    <property type="molecule type" value="Genomic_DNA"/>
</dbReference>
<dbReference type="EMBL" id="CP002684">
    <property type="protein sequence ID" value="AEE32684.1"/>
    <property type="molecule type" value="Genomic_DNA"/>
</dbReference>
<dbReference type="EMBL" id="AY045695">
    <property type="protein sequence ID" value="AAK74053.1"/>
    <property type="status" value="ALT_INIT"/>
    <property type="molecule type" value="mRNA"/>
</dbReference>
<dbReference type="EMBL" id="AY054155">
    <property type="protein sequence ID" value="AAL06816.1"/>
    <property type="molecule type" value="mRNA"/>
</dbReference>
<dbReference type="PIR" id="C96554">
    <property type="entry name" value="C96554"/>
</dbReference>
<dbReference type="RefSeq" id="NP_175568.1">
    <property type="nucleotide sequence ID" value="NM_104035.4"/>
</dbReference>
<dbReference type="SMR" id="Q9C8H3"/>
<dbReference type="FunCoup" id="Q9C8H3">
    <property type="interactions" value="1135"/>
</dbReference>
<dbReference type="IntAct" id="Q9C8H3">
    <property type="interactions" value="2"/>
</dbReference>
<dbReference type="STRING" id="3702.Q9C8H3"/>
<dbReference type="MetOSite" id="Q9C8H3"/>
<dbReference type="PaxDb" id="3702-AT1G51570.1"/>
<dbReference type="ProteomicsDB" id="183067"/>
<dbReference type="EnsemblPlants" id="AT1G51570.1">
    <property type="protein sequence ID" value="AT1G51570.1"/>
    <property type="gene ID" value="AT1G51570"/>
</dbReference>
<dbReference type="GeneID" id="841582"/>
<dbReference type="Gramene" id="AT1G51570.1">
    <property type="protein sequence ID" value="AT1G51570.1"/>
    <property type="gene ID" value="AT1G51570"/>
</dbReference>
<dbReference type="KEGG" id="ath:AT1G51570"/>
<dbReference type="Araport" id="AT1G51570"/>
<dbReference type="TAIR" id="AT1G51570">
    <property type="gene designation" value="MCTP4"/>
</dbReference>
<dbReference type="eggNOG" id="ENOG502R77N">
    <property type="taxonomic scope" value="Eukaryota"/>
</dbReference>
<dbReference type="HOGENOM" id="CLU_003762_1_0_1"/>
<dbReference type="InParanoid" id="Q9C8H3"/>
<dbReference type="OMA" id="FEQICVW"/>
<dbReference type="OrthoDB" id="67700at2759"/>
<dbReference type="PhylomeDB" id="Q9C8H3"/>
<dbReference type="PRO" id="PR:Q9C8H3"/>
<dbReference type="Proteomes" id="UP000006548">
    <property type="component" value="Chromosome 1"/>
</dbReference>
<dbReference type="ExpressionAtlas" id="Q9C8H3">
    <property type="expression patterns" value="baseline and differential"/>
</dbReference>
<dbReference type="GO" id="GO:0005737">
    <property type="term" value="C:cytoplasm"/>
    <property type="evidence" value="ECO:0000314"/>
    <property type="project" value="TAIR"/>
</dbReference>
<dbReference type="GO" id="GO:0005829">
    <property type="term" value="C:cytosol"/>
    <property type="evidence" value="ECO:0000314"/>
    <property type="project" value="TAIR"/>
</dbReference>
<dbReference type="GO" id="GO:0005783">
    <property type="term" value="C:endoplasmic reticulum"/>
    <property type="evidence" value="ECO:0007005"/>
    <property type="project" value="TAIR"/>
</dbReference>
<dbReference type="GO" id="GO:0005789">
    <property type="term" value="C:endoplasmic reticulum membrane"/>
    <property type="evidence" value="ECO:0007669"/>
    <property type="project" value="UniProtKB-SubCell"/>
</dbReference>
<dbReference type="GO" id="GO:0005768">
    <property type="term" value="C:endosome"/>
    <property type="evidence" value="ECO:0000314"/>
    <property type="project" value="UniProtKB"/>
</dbReference>
<dbReference type="GO" id="GO:0010008">
    <property type="term" value="C:endosome membrane"/>
    <property type="evidence" value="ECO:0007669"/>
    <property type="project" value="UniProtKB-SubCell"/>
</dbReference>
<dbReference type="GO" id="GO:0005794">
    <property type="term" value="C:Golgi apparatus"/>
    <property type="evidence" value="ECO:0000314"/>
    <property type="project" value="TAIR"/>
</dbReference>
<dbReference type="GO" id="GO:0000139">
    <property type="term" value="C:Golgi membrane"/>
    <property type="evidence" value="ECO:0007669"/>
    <property type="project" value="UniProtKB-SubCell"/>
</dbReference>
<dbReference type="GO" id="GO:0043229">
    <property type="term" value="C:intracellular organelle"/>
    <property type="evidence" value="ECO:0000316"/>
    <property type="project" value="TAIR"/>
</dbReference>
<dbReference type="GO" id="GO:0009505">
    <property type="term" value="C:plant-type cell wall"/>
    <property type="evidence" value="ECO:0007005"/>
    <property type="project" value="TAIR"/>
</dbReference>
<dbReference type="GO" id="GO:0005886">
    <property type="term" value="C:plasma membrane"/>
    <property type="evidence" value="ECO:0000314"/>
    <property type="project" value="UniProtKB"/>
</dbReference>
<dbReference type="GO" id="GO:0009506">
    <property type="term" value="C:plasmodesma"/>
    <property type="evidence" value="ECO:0000314"/>
    <property type="project" value="TAIR"/>
</dbReference>
<dbReference type="GO" id="GO:0031982">
    <property type="term" value="C:vesicle"/>
    <property type="evidence" value="ECO:0000316"/>
    <property type="project" value="TAIR"/>
</dbReference>
<dbReference type="GO" id="GO:0016757">
    <property type="term" value="F:glycosyltransferase activity"/>
    <property type="evidence" value="ECO:0007669"/>
    <property type="project" value="UniProtKB-KW"/>
</dbReference>
<dbReference type="GO" id="GO:0046872">
    <property type="term" value="F:metal ion binding"/>
    <property type="evidence" value="ECO:0007669"/>
    <property type="project" value="UniProtKB-KW"/>
</dbReference>
<dbReference type="GO" id="GO:1902182">
    <property type="term" value="P:shoot apical meristem development"/>
    <property type="evidence" value="ECO:0000316"/>
    <property type="project" value="TAIR"/>
</dbReference>
<dbReference type="CDD" id="cd08378">
    <property type="entry name" value="C2B_MCTP_PRT_plant"/>
    <property type="match status" value="1"/>
</dbReference>
<dbReference type="CDD" id="cd04019">
    <property type="entry name" value="C2C_MCTP_PRT_plant"/>
    <property type="match status" value="1"/>
</dbReference>
<dbReference type="CDD" id="cd08379">
    <property type="entry name" value="C2D_MCTP_PRT_plant"/>
    <property type="match status" value="1"/>
</dbReference>
<dbReference type="FunFam" id="2.60.40.150:FF:000090">
    <property type="entry name" value="C2 domain-containing protein"/>
    <property type="match status" value="1"/>
</dbReference>
<dbReference type="FunFam" id="2.60.40.150:FF:000119">
    <property type="entry name" value="C2 domain-containing protein"/>
    <property type="match status" value="1"/>
</dbReference>
<dbReference type="FunFam" id="2.60.40.150:FF:000128">
    <property type="entry name" value="C2 domain-containing protein"/>
    <property type="match status" value="1"/>
</dbReference>
<dbReference type="Gene3D" id="2.60.40.150">
    <property type="entry name" value="C2 domain"/>
    <property type="match status" value="3"/>
</dbReference>
<dbReference type="InterPro" id="IPR000008">
    <property type="entry name" value="C2_dom"/>
</dbReference>
<dbReference type="InterPro" id="IPR035892">
    <property type="entry name" value="C2_domain_sf"/>
</dbReference>
<dbReference type="InterPro" id="IPR047257">
    <property type="entry name" value="C2B_MCTP_PRT_plant"/>
</dbReference>
<dbReference type="InterPro" id="IPR047258">
    <property type="entry name" value="C2C_MCTP_PRT_plant"/>
</dbReference>
<dbReference type="InterPro" id="IPR047255">
    <property type="entry name" value="C2D_MCTP_PRT_plant"/>
</dbReference>
<dbReference type="InterPro" id="IPR013583">
    <property type="entry name" value="MCTP_C"/>
</dbReference>
<dbReference type="InterPro" id="IPR047259">
    <property type="entry name" value="QUIRKY-like"/>
</dbReference>
<dbReference type="PANTHER" id="PTHR31425:SF50">
    <property type="entry name" value="FT-INTERACTING PROTEIN 3-RELATED"/>
    <property type="match status" value="1"/>
</dbReference>
<dbReference type="PANTHER" id="PTHR31425">
    <property type="entry name" value="PHOSPHORIBOSYLANTHRANILATE TRANSFERASE ISOFORM 1"/>
    <property type="match status" value="1"/>
</dbReference>
<dbReference type="Pfam" id="PF00168">
    <property type="entry name" value="C2"/>
    <property type="match status" value="3"/>
</dbReference>
<dbReference type="Pfam" id="PF08372">
    <property type="entry name" value="PRT_C"/>
    <property type="match status" value="1"/>
</dbReference>
<dbReference type="SMART" id="SM00239">
    <property type="entry name" value="C2"/>
    <property type="match status" value="3"/>
</dbReference>
<dbReference type="SUPFAM" id="SSF49562">
    <property type="entry name" value="C2 domain (Calcium/lipid-binding domain, CaLB)"/>
    <property type="match status" value="3"/>
</dbReference>
<dbReference type="PROSITE" id="PS50004">
    <property type="entry name" value="C2"/>
    <property type="match status" value="3"/>
</dbReference>
<accession>Q9C8H3</accession>
<accession>Q93VL4</accession>
<protein>
    <recommendedName>
        <fullName evidence="8">FT-interacting protein 4</fullName>
    </recommendedName>
    <alternativeName>
        <fullName evidence="7">Multiple C2 domain and transmembrane region protein 4</fullName>
    </alternativeName>
</protein>
<organism>
    <name type="scientific">Arabidopsis thaliana</name>
    <name type="common">Mouse-ear cress</name>
    <dbReference type="NCBI Taxonomy" id="3702"/>
    <lineage>
        <taxon>Eukaryota</taxon>
        <taxon>Viridiplantae</taxon>
        <taxon>Streptophyta</taxon>
        <taxon>Embryophyta</taxon>
        <taxon>Tracheophyta</taxon>
        <taxon>Spermatophyta</taxon>
        <taxon>Magnoliopsida</taxon>
        <taxon>eudicotyledons</taxon>
        <taxon>Gunneridae</taxon>
        <taxon>Pentapetalae</taxon>
        <taxon>rosids</taxon>
        <taxon>malvids</taxon>
        <taxon>Brassicales</taxon>
        <taxon>Brassicaceae</taxon>
        <taxon>Camelineae</taxon>
        <taxon>Arabidopsis</taxon>
    </lineage>
</organism>
<gene>
    <name evidence="8" type="primary">FTIP4</name>
    <name evidence="7" type="synonym">MCTP4</name>
    <name evidence="10" type="ordered locus">At1g51570</name>
    <name evidence="11" type="ORF">F19C24.20</name>
</gene>